<proteinExistence type="inferred from homology"/>
<dbReference type="EC" id="5.4.3.8" evidence="1"/>
<dbReference type="EMBL" id="CP000001">
    <property type="protein sequence ID" value="AAU19801.1"/>
    <property type="molecule type" value="Genomic_DNA"/>
</dbReference>
<dbReference type="RefSeq" id="WP_000673235.1">
    <property type="nucleotide sequence ID" value="NC_006274.1"/>
</dbReference>
<dbReference type="SMR" id="Q63GB4"/>
<dbReference type="KEGG" id="bcz:BCE33L0438"/>
<dbReference type="PATRIC" id="fig|288681.22.peg.5160"/>
<dbReference type="UniPathway" id="UPA00251">
    <property type="reaction ID" value="UER00317"/>
</dbReference>
<dbReference type="Proteomes" id="UP000002612">
    <property type="component" value="Chromosome"/>
</dbReference>
<dbReference type="GO" id="GO:0005737">
    <property type="term" value="C:cytoplasm"/>
    <property type="evidence" value="ECO:0007669"/>
    <property type="project" value="UniProtKB-SubCell"/>
</dbReference>
<dbReference type="GO" id="GO:0042286">
    <property type="term" value="F:glutamate-1-semialdehyde 2,1-aminomutase activity"/>
    <property type="evidence" value="ECO:0007669"/>
    <property type="project" value="UniProtKB-UniRule"/>
</dbReference>
<dbReference type="GO" id="GO:0030170">
    <property type="term" value="F:pyridoxal phosphate binding"/>
    <property type="evidence" value="ECO:0007669"/>
    <property type="project" value="InterPro"/>
</dbReference>
<dbReference type="GO" id="GO:0008483">
    <property type="term" value="F:transaminase activity"/>
    <property type="evidence" value="ECO:0007669"/>
    <property type="project" value="InterPro"/>
</dbReference>
<dbReference type="GO" id="GO:0006782">
    <property type="term" value="P:protoporphyrinogen IX biosynthetic process"/>
    <property type="evidence" value="ECO:0007669"/>
    <property type="project" value="UniProtKB-UniRule"/>
</dbReference>
<dbReference type="CDD" id="cd00610">
    <property type="entry name" value="OAT_like"/>
    <property type="match status" value="1"/>
</dbReference>
<dbReference type="FunFam" id="3.40.640.10:FF:000021">
    <property type="entry name" value="Glutamate-1-semialdehyde 2,1-aminomutase"/>
    <property type="match status" value="1"/>
</dbReference>
<dbReference type="Gene3D" id="3.90.1150.10">
    <property type="entry name" value="Aspartate Aminotransferase, domain 1"/>
    <property type="match status" value="1"/>
</dbReference>
<dbReference type="Gene3D" id="3.40.640.10">
    <property type="entry name" value="Type I PLP-dependent aspartate aminotransferase-like (Major domain)"/>
    <property type="match status" value="1"/>
</dbReference>
<dbReference type="HAMAP" id="MF_00375">
    <property type="entry name" value="HemL_aminotrans_3"/>
    <property type="match status" value="1"/>
</dbReference>
<dbReference type="InterPro" id="IPR004639">
    <property type="entry name" value="4pyrrol_synth_GluAld_NH2Trfase"/>
</dbReference>
<dbReference type="InterPro" id="IPR005814">
    <property type="entry name" value="Aminotrans_3"/>
</dbReference>
<dbReference type="InterPro" id="IPR049704">
    <property type="entry name" value="Aminotrans_3_PPA_site"/>
</dbReference>
<dbReference type="InterPro" id="IPR015424">
    <property type="entry name" value="PyrdxlP-dep_Trfase"/>
</dbReference>
<dbReference type="InterPro" id="IPR015421">
    <property type="entry name" value="PyrdxlP-dep_Trfase_major"/>
</dbReference>
<dbReference type="InterPro" id="IPR015422">
    <property type="entry name" value="PyrdxlP-dep_Trfase_small"/>
</dbReference>
<dbReference type="NCBIfam" id="TIGR00713">
    <property type="entry name" value="hemL"/>
    <property type="match status" value="1"/>
</dbReference>
<dbReference type="NCBIfam" id="NF000818">
    <property type="entry name" value="PRK00062.1"/>
    <property type="match status" value="1"/>
</dbReference>
<dbReference type="NCBIfam" id="NF009055">
    <property type="entry name" value="PRK12389.1"/>
    <property type="match status" value="1"/>
</dbReference>
<dbReference type="PANTHER" id="PTHR43713">
    <property type="entry name" value="GLUTAMATE-1-SEMIALDEHYDE 2,1-AMINOMUTASE"/>
    <property type="match status" value="1"/>
</dbReference>
<dbReference type="PANTHER" id="PTHR43713:SF1">
    <property type="entry name" value="GLUTAMATE-1-SEMIALDEHYDE 2,1-AMINOMUTASE 2"/>
    <property type="match status" value="1"/>
</dbReference>
<dbReference type="Pfam" id="PF00202">
    <property type="entry name" value="Aminotran_3"/>
    <property type="match status" value="1"/>
</dbReference>
<dbReference type="SUPFAM" id="SSF53383">
    <property type="entry name" value="PLP-dependent transferases"/>
    <property type="match status" value="1"/>
</dbReference>
<dbReference type="PROSITE" id="PS00600">
    <property type="entry name" value="AA_TRANSFER_CLASS_3"/>
    <property type="match status" value="1"/>
</dbReference>
<sequence>MKFTKSEALHKEALEHIVGGVNSPSRSFKAVGGGAPVAMERGKGAYFWDVDGNKYIDYLAAYGPIITGHAHPHITKAITTAAENGVLYGTPTALEVKFAKMLKEAMPALDKVRFVNSGTEAVMTTIRVARAYTGRTKIMKFAGCYHGHSDLVLVAAGSGPSTLGTPDSAGVPQSIAQEVITVPFNNIETLKEALDKWGHEVAAILVEPIVGNFGIVEPKPGFLEKVNELVHEAGALVIYDEVITAFRFMYGGAQDLLGVTPDLTALGKVIGGGLPIGAYGGKKEIMEQVAPLGPAYQAGTMAGNPASMASGIACLEVLQQEGLYEKLDELGAMLEKGILEQAAKHNIDITLNRLKGALTVYFTTNTIEDYDAAQDTDGEMFGKFFKLMLQEGVNLAPSKYEAWFLTTEHTKEDIEYTIEAVGRAFAALADNK</sequence>
<accession>Q63GB4</accession>
<organism>
    <name type="scientific">Bacillus cereus (strain ZK / E33L)</name>
    <dbReference type="NCBI Taxonomy" id="288681"/>
    <lineage>
        <taxon>Bacteria</taxon>
        <taxon>Bacillati</taxon>
        <taxon>Bacillota</taxon>
        <taxon>Bacilli</taxon>
        <taxon>Bacillales</taxon>
        <taxon>Bacillaceae</taxon>
        <taxon>Bacillus</taxon>
        <taxon>Bacillus cereus group</taxon>
    </lineage>
</organism>
<reference key="1">
    <citation type="journal article" date="2006" name="J. Bacteriol.">
        <title>Pathogenomic sequence analysis of Bacillus cereus and Bacillus thuringiensis isolates closely related to Bacillus anthracis.</title>
        <authorList>
            <person name="Han C.S."/>
            <person name="Xie G."/>
            <person name="Challacombe J.F."/>
            <person name="Altherr M.R."/>
            <person name="Bhotika S.S."/>
            <person name="Bruce D."/>
            <person name="Campbell C.S."/>
            <person name="Campbell M.L."/>
            <person name="Chen J."/>
            <person name="Chertkov O."/>
            <person name="Cleland C."/>
            <person name="Dimitrijevic M."/>
            <person name="Doggett N.A."/>
            <person name="Fawcett J.J."/>
            <person name="Glavina T."/>
            <person name="Goodwin L.A."/>
            <person name="Hill K.K."/>
            <person name="Hitchcock P."/>
            <person name="Jackson P.J."/>
            <person name="Keim P."/>
            <person name="Kewalramani A.R."/>
            <person name="Longmire J."/>
            <person name="Lucas S."/>
            <person name="Malfatti S."/>
            <person name="McMurry K."/>
            <person name="Meincke L.J."/>
            <person name="Misra M."/>
            <person name="Moseman B.L."/>
            <person name="Mundt M."/>
            <person name="Munk A.C."/>
            <person name="Okinaka R.T."/>
            <person name="Parson-Quintana B."/>
            <person name="Reilly L.P."/>
            <person name="Richardson P."/>
            <person name="Robinson D.L."/>
            <person name="Rubin E."/>
            <person name="Saunders E."/>
            <person name="Tapia R."/>
            <person name="Tesmer J.G."/>
            <person name="Thayer N."/>
            <person name="Thompson L.S."/>
            <person name="Tice H."/>
            <person name="Ticknor L.O."/>
            <person name="Wills P.L."/>
            <person name="Brettin T.S."/>
            <person name="Gilna P."/>
        </authorList>
    </citation>
    <scope>NUCLEOTIDE SEQUENCE [LARGE SCALE GENOMIC DNA]</scope>
    <source>
        <strain>ZK / E33L</strain>
    </source>
</reference>
<name>GSA1_BACCZ</name>
<evidence type="ECO:0000255" key="1">
    <source>
        <dbReference type="HAMAP-Rule" id="MF_00375"/>
    </source>
</evidence>
<feature type="chain" id="PRO_0000243542" description="Glutamate-1-semialdehyde 2,1-aminomutase 1">
    <location>
        <begin position="1"/>
        <end position="432"/>
    </location>
</feature>
<feature type="modified residue" description="N6-(pyridoxal phosphate)lysine" evidence="1">
    <location>
        <position position="268"/>
    </location>
</feature>
<protein>
    <recommendedName>
        <fullName evidence="1">Glutamate-1-semialdehyde 2,1-aminomutase 1</fullName>
        <shortName evidence="1">GSA 1</shortName>
        <ecNumber evidence="1">5.4.3.8</ecNumber>
    </recommendedName>
    <alternativeName>
        <fullName evidence="1">Glutamate-1-semialdehyde aminotransferase 1</fullName>
        <shortName evidence="1">GSA-AT 1</shortName>
    </alternativeName>
</protein>
<gene>
    <name evidence="1" type="primary">hemL1</name>
    <name type="ordered locus">BCE33L0438</name>
</gene>
<keyword id="KW-0963">Cytoplasm</keyword>
<keyword id="KW-0413">Isomerase</keyword>
<keyword id="KW-0627">Porphyrin biosynthesis</keyword>
<keyword id="KW-0663">Pyridoxal phosphate</keyword>
<comment type="catalytic activity">
    <reaction evidence="1">
        <text>(S)-4-amino-5-oxopentanoate = 5-aminolevulinate</text>
        <dbReference type="Rhea" id="RHEA:14265"/>
        <dbReference type="ChEBI" id="CHEBI:57501"/>
        <dbReference type="ChEBI" id="CHEBI:356416"/>
        <dbReference type="EC" id="5.4.3.8"/>
    </reaction>
</comment>
<comment type="cofactor">
    <cofactor evidence="1">
        <name>pyridoxal 5'-phosphate</name>
        <dbReference type="ChEBI" id="CHEBI:597326"/>
    </cofactor>
</comment>
<comment type="pathway">
    <text evidence="1">Porphyrin-containing compound metabolism; protoporphyrin-IX biosynthesis; 5-aminolevulinate from L-glutamyl-tRNA(Glu): step 2/2.</text>
</comment>
<comment type="subunit">
    <text evidence="1">Homodimer.</text>
</comment>
<comment type="subcellular location">
    <subcellularLocation>
        <location evidence="1">Cytoplasm</location>
    </subcellularLocation>
</comment>
<comment type="similarity">
    <text evidence="1">Belongs to the class-III pyridoxal-phosphate-dependent aminotransferase family. HemL subfamily.</text>
</comment>